<accession>P0DOQ3</accession>
<accession>P33066</accession>
<accession>Q9QNI4</accession>
<gene>
    <name type="primary">OPG123</name>
    <name type="synonym">NPH1</name>
    <name type="ORF">D11L</name>
    <name type="ORF">N1L</name>
</gene>
<proteinExistence type="inferred from homology"/>
<comment type="function">
    <text evidence="2">DNA-dependent ATPase that acts as a 5' to 3' translocase on single-stranded DNA and thereby plays a role in transcription termination of viral early genes. Uses forward translocation in concert with the viral RNA polymerase RAP94/OPG109 subunit and the capping enzyme/VTF to catalyze release of UUUUUNU-containing nascent RNA from the elongation complex. In addition, acts as a positive elongation factor to assist transcription through problematic sequences.</text>
</comment>
<comment type="catalytic activity">
    <reaction evidence="2">
        <text>a ribonucleoside 5'-triphosphate + H2O = a ribonucleoside 5'-diphosphate + phosphate + H(+)</text>
        <dbReference type="Rhea" id="RHEA:23680"/>
        <dbReference type="ChEBI" id="CHEBI:15377"/>
        <dbReference type="ChEBI" id="CHEBI:15378"/>
        <dbReference type="ChEBI" id="CHEBI:43474"/>
        <dbReference type="ChEBI" id="CHEBI:57930"/>
        <dbReference type="ChEBI" id="CHEBI:61557"/>
        <dbReference type="EC" id="3.6.1.15"/>
    </reaction>
</comment>
<comment type="subunit">
    <text evidence="2">Monomer. Interacts (via C-terminus) with RAP94/OPG109 (via N-terminus). Interacts with the cap-specific mRNA (nucleoside-2'-O-)-methyltransferase OPG102.</text>
</comment>
<comment type="subcellular location">
    <subcellularLocation>
        <location evidence="2">Virion</location>
    </subcellularLocation>
    <text evidence="2">Virion core enzyme.</text>
</comment>
<comment type="similarity">
    <text evidence="5">Belongs to the helicase family. NPH I subfamily.</text>
</comment>
<comment type="sequence caution" evidence="5">
    <conflict type="erroneous initiation">
        <sequence resource="EMBL-CDS" id="CAA47600"/>
    </conflict>
</comment>
<organism>
    <name type="scientific">Variola virus (isolate Human/India/Ind3/1967)</name>
    <name type="common">VARV</name>
    <name type="synonym">Smallpox virus</name>
    <dbReference type="NCBI Taxonomy" id="587200"/>
    <lineage>
        <taxon>Viruses</taxon>
        <taxon>Varidnaviria</taxon>
        <taxon>Bamfordvirae</taxon>
        <taxon>Nucleocytoviricota</taxon>
        <taxon>Pokkesviricetes</taxon>
        <taxon>Chitovirales</taxon>
        <taxon>Poxviridae</taxon>
        <taxon>Chordopoxvirinae</taxon>
        <taxon>Orthopoxvirus</taxon>
        <taxon>Variola virus</taxon>
    </lineage>
</organism>
<sequence length="631" mass="72353">MSKSHAAYIDYALRRTTNMPVEMMGTDVVRLKDYQHFVARVFLGLDSMHSLLLFHETGVGKTMTTVYILKHLKDIYTNWAIILLVKKALIEDPWMNTILRYAPEITKDCIFINYDDQNFRNKFFTNIKTINSKSRICVIIDECHNFISKSLIKEDGKIRPTRSVYNFLSKTIALKNHKMICLSATPIVNSVQEFTMLVNLLRPGSLQHQSLFENKRLVNEKELVSKLGGLCSYIVNNEFSIFDDVEGSASFAKKTVLMRYVNMSKKQEEIYQKAKLTEIKTGISSFRILRRMATTFTFDSFPERQNRDPGEYAQEIATLYNDFKRSLRDREFSKSALDTFKKGELLGGDASAADISLFTELKEKSAKFIDVCLGILASHGKCLVFEPFVNQSGIEILLLYFKVFGISNIEFSSRTKDTRIKAVAEFNQESNTNGECIKTCVFSSSGGEGISFFSINDIFILDMTWNEASLRQIVGRAIRLNSHVLTPPERRYVNVHFIMARLSNGMPTVDEDLFEIIQSKSKEFVQLFRVFKHTSLEWIHANEKDFSPIDNESGWKTLVSRAIDLSSKKNITNKLIEGTNIWYSNSNRLMSINRGFKGVDGRVYDVDGNYLHDMPDNPVIKIHDGKLIYIF</sequence>
<dbReference type="EC" id="3.6.1.15"/>
<dbReference type="EMBL" id="X67119">
    <property type="protein sequence ID" value="CAA47600.1"/>
    <property type="status" value="ALT_INIT"/>
    <property type="molecule type" value="Genomic_DNA"/>
</dbReference>
<dbReference type="EMBL" id="X69198">
    <property type="protein sequence ID" value="CAA49042.1"/>
    <property type="molecule type" value="Genomic_DNA"/>
</dbReference>
<dbReference type="PIR" id="C72163">
    <property type="entry name" value="C72163"/>
</dbReference>
<dbReference type="PIR" id="H36847">
    <property type="entry name" value="H36847"/>
</dbReference>
<dbReference type="RefSeq" id="NP_042145.1">
    <property type="nucleotide sequence ID" value="NC_001611.1"/>
</dbReference>
<dbReference type="SMR" id="P0DOQ3"/>
<dbReference type="GeneID" id="1486475"/>
<dbReference type="KEGG" id="vg:1486475"/>
<dbReference type="Proteomes" id="UP000002060">
    <property type="component" value="Segment"/>
</dbReference>
<dbReference type="GO" id="GO:0044423">
    <property type="term" value="C:virion component"/>
    <property type="evidence" value="ECO:0007669"/>
    <property type="project" value="UniProtKB-KW"/>
</dbReference>
<dbReference type="GO" id="GO:0005524">
    <property type="term" value="F:ATP binding"/>
    <property type="evidence" value="ECO:0007669"/>
    <property type="project" value="UniProtKB-KW"/>
</dbReference>
<dbReference type="GO" id="GO:0003677">
    <property type="term" value="F:DNA binding"/>
    <property type="evidence" value="ECO:0007669"/>
    <property type="project" value="UniProtKB-KW"/>
</dbReference>
<dbReference type="GO" id="GO:0017111">
    <property type="term" value="F:ribonucleoside triphosphate phosphatase activity"/>
    <property type="evidence" value="ECO:0007669"/>
    <property type="project" value="UniProtKB-EC"/>
</dbReference>
<dbReference type="GO" id="GO:0006351">
    <property type="term" value="P:DNA-templated transcription"/>
    <property type="evidence" value="ECO:0007669"/>
    <property type="project" value="InterPro"/>
</dbReference>
<dbReference type="CDD" id="cd18785">
    <property type="entry name" value="SF2_C"/>
    <property type="match status" value="1"/>
</dbReference>
<dbReference type="Gene3D" id="3.40.50.300">
    <property type="entry name" value="P-loop containing nucleotide triphosphate hydrolases"/>
    <property type="match status" value="2"/>
</dbReference>
<dbReference type="InterPro" id="IPR014001">
    <property type="entry name" value="Helicase_ATP-bd"/>
</dbReference>
<dbReference type="InterPro" id="IPR001650">
    <property type="entry name" value="Helicase_C-like"/>
</dbReference>
<dbReference type="InterPro" id="IPR013676">
    <property type="entry name" value="NPHI_C"/>
</dbReference>
<dbReference type="InterPro" id="IPR027417">
    <property type="entry name" value="P-loop_NTPase"/>
</dbReference>
<dbReference type="InterPro" id="IPR000330">
    <property type="entry name" value="SNF2_N"/>
</dbReference>
<dbReference type="PANTHER" id="PTHR10799">
    <property type="entry name" value="SNF2/RAD54 HELICASE FAMILY"/>
    <property type="match status" value="1"/>
</dbReference>
<dbReference type="Pfam" id="PF00271">
    <property type="entry name" value="Helicase_C"/>
    <property type="match status" value="1"/>
</dbReference>
<dbReference type="Pfam" id="PF08469">
    <property type="entry name" value="NPHI_C"/>
    <property type="match status" value="1"/>
</dbReference>
<dbReference type="Pfam" id="PF00176">
    <property type="entry name" value="SNF2-rel_dom"/>
    <property type="match status" value="1"/>
</dbReference>
<dbReference type="SMART" id="SM00487">
    <property type="entry name" value="DEXDc"/>
    <property type="match status" value="1"/>
</dbReference>
<dbReference type="SMART" id="SM00490">
    <property type="entry name" value="HELICc"/>
    <property type="match status" value="1"/>
</dbReference>
<dbReference type="SUPFAM" id="SSF52540">
    <property type="entry name" value="P-loop containing nucleoside triphosphate hydrolases"/>
    <property type="match status" value="2"/>
</dbReference>
<dbReference type="PROSITE" id="PS51192">
    <property type="entry name" value="HELICASE_ATP_BIND_1"/>
    <property type="match status" value="1"/>
</dbReference>
<dbReference type="PROSITE" id="PS51194">
    <property type="entry name" value="HELICASE_CTER"/>
    <property type="match status" value="1"/>
</dbReference>
<organismHost>
    <name type="scientific">Homo sapiens</name>
    <name type="common">Human</name>
    <dbReference type="NCBI Taxonomy" id="9606"/>
</organismHost>
<feature type="chain" id="PRO_0000099093" description="Nucleoside triphosphatase I">
    <location>
        <begin position="1"/>
        <end position="631"/>
    </location>
</feature>
<feature type="domain" description="Helicase ATP-binding" evidence="3">
    <location>
        <begin position="42"/>
        <end position="204"/>
    </location>
</feature>
<feature type="domain" description="Helicase C-terminal" evidence="4">
    <location>
        <begin position="367"/>
        <end position="532"/>
    </location>
</feature>
<feature type="region of interest" description="Binding to the cap-specific mRNA (nucleoside-2'-O-)-methyltransferase" evidence="1">
    <location>
        <begin position="457"/>
        <end position="524"/>
    </location>
</feature>
<feature type="short sequence motif" description="DEXH box">
    <location>
        <begin position="141"/>
        <end position="144"/>
    </location>
</feature>
<feature type="binding site" evidence="3">
    <location>
        <begin position="55"/>
        <end position="62"/>
    </location>
    <ligand>
        <name>ATP</name>
        <dbReference type="ChEBI" id="CHEBI:30616"/>
    </ligand>
</feature>
<keyword id="KW-0067">ATP-binding</keyword>
<keyword id="KW-0238">DNA-binding</keyword>
<keyword id="KW-0378">Hydrolase</keyword>
<keyword id="KW-0426">Late protein</keyword>
<keyword id="KW-0547">Nucleotide-binding</keyword>
<keyword id="KW-1185">Reference proteome</keyword>
<keyword id="KW-0804">Transcription</keyword>
<keyword id="KW-0946">Virion</keyword>
<protein>
    <recommendedName>
        <fullName>Nucleoside triphosphatase I</fullName>
        <ecNumber>3.6.1.15</ecNumber>
    </recommendedName>
    <alternativeName>
        <fullName>NPH-I</fullName>
    </alternativeName>
    <alternativeName>
        <fullName>Nucleoside triphosphate phosphohydrolase I</fullName>
        <shortName>NPH I</shortName>
    </alternativeName>
</protein>
<reference key="1">
    <citation type="journal article" date="1993" name="Virus Res.">
        <title>Nucleotide sequence analysis of variola virus HindIII M, L, I genome fragments.</title>
        <authorList>
            <person name="Shchelkunov S.N."/>
            <person name="Blinov V.M."/>
            <person name="Totmenin A.V."/>
            <person name="Marennikova S.S."/>
            <person name="Kolykhalov A.A."/>
            <person name="Frolov I.V."/>
            <person name="Chizhikov V.E."/>
            <person name="Gytorov V.V."/>
            <person name="Gashikov P.V."/>
            <person name="Belanov E.F."/>
            <person name="Belavin P.A."/>
            <person name="Resenchuk S.M."/>
            <person name="Andzhaparidze O.G."/>
            <person name="Sandakhchiev L.S."/>
        </authorList>
    </citation>
    <scope>NUCLEOTIDE SEQUENCE [GENOMIC DNA]</scope>
</reference>
<reference key="2">
    <citation type="journal article" date="1993" name="FEBS Lett.">
        <title>Genes of variola and vaccinia viruses necessary to overcome the host protective mechanisms.</title>
        <authorList>
            <person name="Shchelkunov S.N."/>
            <person name="Blinov V.M."/>
            <person name="Sandakhchiev L.S."/>
        </authorList>
    </citation>
    <scope>NUCLEOTIDE SEQUENCE [GENOMIC DNA]</scope>
</reference>
<evidence type="ECO:0000250" key="1"/>
<evidence type="ECO:0000250" key="2">
    <source>
        <dbReference type="UniProtKB" id="P05807"/>
    </source>
</evidence>
<evidence type="ECO:0000255" key="3">
    <source>
        <dbReference type="PROSITE-ProRule" id="PRU00541"/>
    </source>
</evidence>
<evidence type="ECO:0000255" key="4">
    <source>
        <dbReference type="PROSITE-ProRule" id="PRU00542"/>
    </source>
</evidence>
<evidence type="ECO:0000305" key="5"/>
<name>NTP1_VAR67</name>